<feature type="chain" id="PRO_0000408572" description="Cx9C motif-containing protein 4, mitochondrial">
    <location>
        <begin position="1"/>
        <end position="85"/>
    </location>
</feature>
<feature type="domain" description="CHCH" evidence="2">
    <location>
        <begin position="6"/>
        <end position="48"/>
    </location>
</feature>
<feature type="short sequence motif" description="Cx9C motif 1" evidence="2">
    <location>
        <begin position="9"/>
        <end position="19"/>
    </location>
</feature>
<feature type="short sequence motif" description="Cx9C motif 2" evidence="2">
    <location>
        <begin position="30"/>
        <end position="40"/>
    </location>
</feature>
<feature type="disulfide bond" evidence="2">
    <location>
        <begin position="9"/>
        <end position="40"/>
    </location>
</feature>
<feature type="disulfide bond" evidence="2">
    <location>
        <begin position="19"/>
        <end position="30"/>
    </location>
</feature>
<dbReference type="EMBL" id="GG692396">
    <property type="protein sequence ID" value="EER34597.1"/>
    <property type="status" value="ALT_INIT"/>
    <property type="molecule type" value="Genomic_DNA"/>
</dbReference>
<dbReference type="RefSeq" id="XP_002547152.1">
    <property type="nucleotide sequence ID" value="XM_002547106.1"/>
</dbReference>
<dbReference type="SMR" id="C5M6H7"/>
<dbReference type="STRING" id="294747.C5M6H7"/>
<dbReference type="GeneID" id="8301346"/>
<dbReference type="KEGG" id="ctp:CTRG_01458"/>
<dbReference type="eggNOG" id="ENOG502S7M4">
    <property type="taxonomic scope" value="Eukaryota"/>
</dbReference>
<dbReference type="HOGENOM" id="CLU_177210_0_1_1"/>
<dbReference type="OrthoDB" id="13601at2759"/>
<dbReference type="Proteomes" id="UP000002037">
    <property type="component" value="Unassembled WGS sequence"/>
</dbReference>
<dbReference type="GO" id="GO:0005758">
    <property type="term" value="C:mitochondrial intermembrane space"/>
    <property type="evidence" value="ECO:0007669"/>
    <property type="project" value="UniProtKB-SubCell"/>
</dbReference>
<dbReference type="FunFam" id="1.10.287.1130:FF:000008">
    <property type="entry name" value="Cx9C motif-containing protein 4, mitochondrial"/>
    <property type="match status" value="1"/>
</dbReference>
<dbReference type="Gene3D" id="1.10.287.1130">
    <property type="entry name" value="CytochromE C oxidase copper chaperone"/>
    <property type="match status" value="1"/>
</dbReference>
<dbReference type="InterPro" id="IPR027179">
    <property type="entry name" value="CMC4"/>
</dbReference>
<dbReference type="InterPro" id="IPR009069">
    <property type="entry name" value="Cys_alpha_HP_mot_SF"/>
</dbReference>
<dbReference type="PANTHER" id="PTHR15590">
    <property type="entry name" value="CX9C MOTIF-CONTAINING PROTEIN 4"/>
    <property type="match status" value="1"/>
</dbReference>
<dbReference type="PANTHER" id="PTHR15590:SF0">
    <property type="entry name" value="CX9C MOTIF-CONTAINING PROTEIN 4"/>
    <property type="match status" value="1"/>
</dbReference>
<dbReference type="Pfam" id="PF08991">
    <property type="entry name" value="CMC4"/>
    <property type="match status" value="1"/>
</dbReference>
<dbReference type="SUPFAM" id="SSF47072">
    <property type="entry name" value="Cysteine alpha-hairpin motif"/>
    <property type="match status" value="1"/>
</dbReference>
<dbReference type="PROSITE" id="PS51808">
    <property type="entry name" value="CHCH"/>
    <property type="match status" value="1"/>
</dbReference>
<protein>
    <recommendedName>
        <fullName>Cx9C motif-containing protein 4, mitochondrial</fullName>
    </recommendedName>
</protein>
<comment type="subcellular location">
    <subcellularLocation>
        <location evidence="1">Mitochondrion intermembrane space</location>
    </subcellularLocation>
    <text evidence="1">Imported into the mitochondria via the mitochondrial disulfide relay system.</text>
</comment>
<comment type="domain">
    <text evidence="1">The twin Cx9C motifs are involved in the recognition by the mitochondrial disulfide relay system.</text>
</comment>
<comment type="similarity">
    <text evidence="3">Belongs to the CMC4 family.</text>
</comment>
<comment type="sequence caution" evidence="3">
    <conflict type="erroneous initiation">
        <sequence resource="EMBL-CDS" id="EER34597"/>
    </conflict>
    <text>Extended N-terminus.</text>
</comment>
<sequence length="85" mass="9641">MSDEINETCKPQACAIQNCLMKNGYNESKCSYYIDELYKCCKKFYESNGSSASSVCCPKFNLLQLKLKQRELGQIDANLIDTKHG</sequence>
<proteinExistence type="inferred from homology"/>
<organism>
    <name type="scientific">Candida tropicalis (strain ATCC MYA-3404 / T1)</name>
    <name type="common">Yeast</name>
    <dbReference type="NCBI Taxonomy" id="294747"/>
    <lineage>
        <taxon>Eukaryota</taxon>
        <taxon>Fungi</taxon>
        <taxon>Dikarya</taxon>
        <taxon>Ascomycota</taxon>
        <taxon>Saccharomycotina</taxon>
        <taxon>Pichiomycetes</taxon>
        <taxon>Debaryomycetaceae</taxon>
        <taxon>Candida/Lodderomyces clade</taxon>
        <taxon>Candida</taxon>
    </lineage>
</organism>
<evidence type="ECO:0000250" key="1"/>
<evidence type="ECO:0000255" key="2">
    <source>
        <dbReference type="PROSITE-ProRule" id="PRU01150"/>
    </source>
</evidence>
<evidence type="ECO:0000305" key="3"/>
<gene>
    <name type="primary">CMC4</name>
    <name type="ORF">CTRG_01458</name>
</gene>
<name>CMC4_CANTT</name>
<keyword id="KW-1015">Disulfide bond</keyword>
<keyword id="KW-0496">Mitochondrion</keyword>
<keyword id="KW-1185">Reference proteome</keyword>
<keyword id="KW-0677">Repeat</keyword>
<accession>C5M6H7</accession>
<reference key="1">
    <citation type="journal article" date="2009" name="Nature">
        <title>Evolution of pathogenicity and sexual reproduction in eight Candida genomes.</title>
        <authorList>
            <person name="Butler G."/>
            <person name="Rasmussen M.D."/>
            <person name="Lin M.F."/>
            <person name="Santos M.A.S."/>
            <person name="Sakthikumar S."/>
            <person name="Munro C.A."/>
            <person name="Rheinbay E."/>
            <person name="Grabherr M."/>
            <person name="Forche A."/>
            <person name="Reedy J.L."/>
            <person name="Agrafioti I."/>
            <person name="Arnaud M.B."/>
            <person name="Bates S."/>
            <person name="Brown A.J.P."/>
            <person name="Brunke S."/>
            <person name="Costanzo M.C."/>
            <person name="Fitzpatrick D.A."/>
            <person name="de Groot P.W.J."/>
            <person name="Harris D."/>
            <person name="Hoyer L.L."/>
            <person name="Hube B."/>
            <person name="Klis F.M."/>
            <person name="Kodira C."/>
            <person name="Lennard N."/>
            <person name="Logue M.E."/>
            <person name="Martin R."/>
            <person name="Neiman A.M."/>
            <person name="Nikolaou E."/>
            <person name="Quail M.A."/>
            <person name="Quinn J."/>
            <person name="Santos M.C."/>
            <person name="Schmitzberger F.F."/>
            <person name="Sherlock G."/>
            <person name="Shah P."/>
            <person name="Silverstein K.A.T."/>
            <person name="Skrzypek M.S."/>
            <person name="Soll D."/>
            <person name="Staggs R."/>
            <person name="Stansfield I."/>
            <person name="Stumpf M.P.H."/>
            <person name="Sudbery P.E."/>
            <person name="Srikantha T."/>
            <person name="Zeng Q."/>
            <person name="Berman J."/>
            <person name="Berriman M."/>
            <person name="Heitman J."/>
            <person name="Gow N.A.R."/>
            <person name="Lorenz M.C."/>
            <person name="Birren B.W."/>
            <person name="Kellis M."/>
            <person name="Cuomo C.A."/>
        </authorList>
    </citation>
    <scope>NUCLEOTIDE SEQUENCE [LARGE SCALE GENOMIC DNA]</scope>
    <source>
        <strain>ATCC MYA-3404 / T1</strain>
    </source>
</reference>